<gene>
    <name evidence="1" type="primary">rpsP</name>
    <name type="ordered locus">AFE_2855</name>
</gene>
<name>RS16_ACIF2</name>
<reference key="1">
    <citation type="journal article" date="2008" name="BMC Genomics">
        <title>Acidithiobacillus ferrooxidans metabolism: from genome sequence to industrial applications.</title>
        <authorList>
            <person name="Valdes J."/>
            <person name="Pedroso I."/>
            <person name="Quatrini R."/>
            <person name="Dodson R.J."/>
            <person name="Tettelin H."/>
            <person name="Blake R. II"/>
            <person name="Eisen J.A."/>
            <person name="Holmes D.S."/>
        </authorList>
    </citation>
    <scope>NUCLEOTIDE SEQUENCE [LARGE SCALE GENOMIC DNA]</scope>
    <source>
        <strain>ATCC 23270 / DSM 14882 / CIP 104768 / NCIMB 8455</strain>
    </source>
</reference>
<evidence type="ECO:0000255" key="1">
    <source>
        <dbReference type="HAMAP-Rule" id="MF_00385"/>
    </source>
</evidence>
<evidence type="ECO:0000305" key="2"/>
<protein>
    <recommendedName>
        <fullName evidence="1">Small ribosomal subunit protein bS16</fullName>
    </recommendedName>
    <alternativeName>
        <fullName evidence="2">30S ribosomal protein S16</fullName>
    </alternativeName>
</protein>
<accession>B7J948</accession>
<sequence>MVVIRMARGGAKKRPFYHIVVADSRSRRDGRFIERLGFYNPIGAVAELRIDKERAAYWLSQGAQPSDTVAGFLKKEGVSKTGVASV</sequence>
<organism>
    <name type="scientific">Acidithiobacillus ferrooxidans (strain ATCC 23270 / DSM 14882 / CIP 104768 / NCIMB 8455)</name>
    <name type="common">Ferrobacillus ferrooxidans (strain ATCC 23270)</name>
    <dbReference type="NCBI Taxonomy" id="243159"/>
    <lineage>
        <taxon>Bacteria</taxon>
        <taxon>Pseudomonadati</taxon>
        <taxon>Pseudomonadota</taxon>
        <taxon>Acidithiobacillia</taxon>
        <taxon>Acidithiobacillales</taxon>
        <taxon>Acidithiobacillaceae</taxon>
        <taxon>Acidithiobacillus</taxon>
    </lineage>
</organism>
<proteinExistence type="inferred from homology"/>
<feature type="chain" id="PRO_1000196307" description="Small ribosomal subunit protein bS16">
    <location>
        <begin position="1"/>
        <end position="86"/>
    </location>
</feature>
<dbReference type="EMBL" id="CP001219">
    <property type="protein sequence ID" value="ACK80796.1"/>
    <property type="molecule type" value="Genomic_DNA"/>
</dbReference>
<dbReference type="RefSeq" id="WP_009568284.1">
    <property type="nucleotide sequence ID" value="NC_011761.1"/>
</dbReference>
<dbReference type="SMR" id="B7J948"/>
<dbReference type="STRING" id="243159.AFE_2855"/>
<dbReference type="PaxDb" id="243159-AFE_2855"/>
<dbReference type="GeneID" id="65281882"/>
<dbReference type="KEGG" id="afr:AFE_2855"/>
<dbReference type="eggNOG" id="COG0228">
    <property type="taxonomic scope" value="Bacteria"/>
</dbReference>
<dbReference type="HOGENOM" id="CLU_100590_5_0_6"/>
<dbReference type="Proteomes" id="UP000001362">
    <property type="component" value="Chromosome"/>
</dbReference>
<dbReference type="GO" id="GO:0005737">
    <property type="term" value="C:cytoplasm"/>
    <property type="evidence" value="ECO:0007669"/>
    <property type="project" value="UniProtKB-ARBA"/>
</dbReference>
<dbReference type="GO" id="GO:0015935">
    <property type="term" value="C:small ribosomal subunit"/>
    <property type="evidence" value="ECO:0007669"/>
    <property type="project" value="TreeGrafter"/>
</dbReference>
<dbReference type="GO" id="GO:0003735">
    <property type="term" value="F:structural constituent of ribosome"/>
    <property type="evidence" value="ECO:0007669"/>
    <property type="project" value="InterPro"/>
</dbReference>
<dbReference type="GO" id="GO:0006412">
    <property type="term" value="P:translation"/>
    <property type="evidence" value="ECO:0007669"/>
    <property type="project" value="UniProtKB-UniRule"/>
</dbReference>
<dbReference type="Gene3D" id="3.30.1320.10">
    <property type="match status" value="1"/>
</dbReference>
<dbReference type="HAMAP" id="MF_00385">
    <property type="entry name" value="Ribosomal_bS16"/>
    <property type="match status" value="1"/>
</dbReference>
<dbReference type="InterPro" id="IPR000307">
    <property type="entry name" value="Ribosomal_bS16"/>
</dbReference>
<dbReference type="InterPro" id="IPR023803">
    <property type="entry name" value="Ribosomal_bS16_dom_sf"/>
</dbReference>
<dbReference type="NCBIfam" id="TIGR00002">
    <property type="entry name" value="S16"/>
    <property type="match status" value="1"/>
</dbReference>
<dbReference type="PANTHER" id="PTHR12919">
    <property type="entry name" value="30S RIBOSOMAL PROTEIN S16"/>
    <property type="match status" value="1"/>
</dbReference>
<dbReference type="PANTHER" id="PTHR12919:SF20">
    <property type="entry name" value="SMALL RIBOSOMAL SUBUNIT PROTEIN BS16M"/>
    <property type="match status" value="1"/>
</dbReference>
<dbReference type="Pfam" id="PF00886">
    <property type="entry name" value="Ribosomal_S16"/>
    <property type="match status" value="1"/>
</dbReference>
<dbReference type="SUPFAM" id="SSF54565">
    <property type="entry name" value="Ribosomal protein S16"/>
    <property type="match status" value="1"/>
</dbReference>
<keyword id="KW-1185">Reference proteome</keyword>
<keyword id="KW-0687">Ribonucleoprotein</keyword>
<keyword id="KW-0689">Ribosomal protein</keyword>
<comment type="similarity">
    <text evidence="1">Belongs to the bacterial ribosomal protein bS16 family.</text>
</comment>